<feature type="chain" id="PRO_1000002768" description="Crossover junction endodeoxyribonuclease RuvC">
    <location>
        <begin position="1"/>
        <end position="180"/>
    </location>
</feature>
<feature type="active site" evidence="1">
    <location>
        <position position="7"/>
    </location>
</feature>
<feature type="active site" evidence="1">
    <location>
        <position position="66"/>
    </location>
</feature>
<feature type="active site" evidence="1">
    <location>
        <position position="138"/>
    </location>
</feature>
<feature type="binding site" evidence="1">
    <location>
        <position position="7"/>
    </location>
    <ligand>
        <name>Mg(2+)</name>
        <dbReference type="ChEBI" id="CHEBI:18420"/>
        <label>1</label>
    </ligand>
</feature>
<feature type="binding site" evidence="1">
    <location>
        <position position="66"/>
    </location>
    <ligand>
        <name>Mg(2+)</name>
        <dbReference type="ChEBI" id="CHEBI:18420"/>
        <label>2</label>
    </ligand>
</feature>
<feature type="binding site" evidence="1">
    <location>
        <position position="138"/>
    </location>
    <ligand>
        <name>Mg(2+)</name>
        <dbReference type="ChEBI" id="CHEBI:18420"/>
        <label>1</label>
    </ligand>
</feature>
<protein>
    <recommendedName>
        <fullName evidence="1">Crossover junction endodeoxyribonuclease RuvC</fullName>
        <ecNumber evidence="1">3.1.21.10</ecNumber>
    </recommendedName>
    <alternativeName>
        <fullName evidence="1">Holliday junction nuclease RuvC</fullName>
    </alternativeName>
    <alternativeName>
        <fullName evidence="1">Holliday junction resolvase RuvC</fullName>
    </alternativeName>
</protein>
<name>RUVC_HERAR</name>
<accession>A4G1U7</accession>
<reference key="1">
    <citation type="journal article" date="2007" name="PLoS Genet.">
        <title>A tale of two oxidation states: bacterial colonization of arsenic-rich environments.</title>
        <authorList>
            <person name="Muller D."/>
            <person name="Medigue C."/>
            <person name="Koechler S."/>
            <person name="Barbe V."/>
            <person name="Barakat M."/>
            <person name="Talla E."/>
            <person name="Bonnefoy V."/>
            <person name="Krin E."/>
            <person name="Arsene-Ploetze F."/>
            <person name="Carapito C."/>
            <person name="Chandler M."/>
            <person name="Cournoyer B."/>
            <person name="Cruveiller S."/>
            <person name="Dossat C."/>
            <person name="Duval S."/>
            <person name="Heymann M."/>
            <person name="Leize E."/>
            <person name="Lieutaud A."/>
            <person name="Lievremont D."/>
            <person name="Makita Y."/>
            <person name="Mangenot S."/>
            <person name="Nitschke W."/>
            <person name="Ortet P."/>
            <person name="Perdrial N."/>
            <person name="Schoepp B."/>
            <person name="Siguier P."/>
            <person name="Simeonova D.D."/>
            <person name="Rouy Z."/>
            <person name="Segurens B."/>
            <person name="Turlin E."/>
            <person name="Vallenet D."/>
            <person name="van Dorsselaer A."/>
            <person name="Weiss S."/>
            <person name="Weissenbach J."/>
            <person name="Lett M.-C."/>
            <person name="Danchin A."/>
            <person name="Bertin P.N."/>
        </authorList>
    </citation>
    <scope>NUCLEOTIDE SEQUENCE [LARGE SCALE GENOMIC DNA]</scope>
    <source>
        <strain>ULPAs1</strain>
    </source>
</reference>
<evidence type="ECO:0000255" key="1">
    <source>
        <dbReference type="HAMAP-Rule" id="MF_00034"/>
    </source>
</evidence>
<sequence>MKILGIDPGLRTTGFGVIEKQGNKLSYIASGTIKTPDADLPQRLKTILVSVAEVIATYKPDCAAIEKVFVNVNPQSTLLLGQARGAAICALVGADLFVAEYTALQVKQAVVGQGKAQKAQVQDMVQRLLKLSGLPGTDAADALGVAICHAHSGEALSMLGALAPELAKKGLRVRGGRLVG</sequence>
<comment type="function">
    <text evidence="1">The RuvA-RuvB-RuvC complex processes Holliday junction (HJ) DNA during genetic recombination and DNA repair. Endonuclease that resolves HJ intermediates. Cleaves cruciform DNA by making single-stranded nicks across the HJ at symmetrical positions within the homologous arms, yielding a 5'-phosphate and a 3'-hydroxyl group; requires a central core of homology in the junction. The consensus cleavage sequence is 5'-(A/T)TT(C/G)-3'. Cleavage occurs on the 3'-side of the TT dinucleotide at the point of strand exchange. HJ branch migration catalyzed by RuvA-RuvB allows RuvC to scan DNA until it finds its consensus sequence, where it cleaves and resolves the cruciform DNA.</text>
</comment>
<comment type="catalytic activity">
    <reaction evidence="1">
        <text>Endonucleolytic cleavage at a junction such as a reciprocal single-stranded crossover between two homologous DNA duplexes (Holliday junction).</text>
        <dbReference type="EC" id="3.1.21.10"/>
    </reaction>
</comment>
<comment type="cofactor">
    <cofactor evidence="1">
        <name>Mg(2+)</name>
        <dbReference type="ChEBI" id="CHEBI:18420"/>
    </cofactor>
    <text evidence="1">Binds 2 Mg(2+) ion per subunit.</text>
</comment>
<comment type="subunit">
    <text evidence="1">Homodimer which binds Holliday junction (HJ) DNA. The HJ becomes 2-fold symmetrical on binding to RuvC with unstacked arms; it has a different conformation from HJ DNA in complex with RuvA. In the full resolvosome a probable DNA-RuvA(4)-RuvB(12)-RuvC(2) complex forms which resolves the HJ.</text>
</comment>
<comment type="subcellular location">
    <subcellularLocation>
        <location evidence="1">Cytoplasm</location>
    </subcellularLocation>
</comment>
<comment type="similarity">
    <text evidence="1">Belongs to the RuvC family.</text>
</comment>
<dbReference type="EC" id="3.1.21.10" evidence="1"/>
<dbReference type="EMBL" id="CU207211">
    <property type="protein sequence ID" value="CAL60484.1"/>
    <property type="molecule type" value="Genomic_DNA"/>
</dbReference>
<dbReference type="SMR" id="A4G1U7"/>
<dbReference type="STRING" id="204773.HEAR0256"/>
<dbReference type="KEGG" id="har:HEAR0256"/>
<dbReference type="eggNOG" id="COG0817">
    <property type="taxonomic scope" value="Bacteria"/>
</dbReference>
<dbReference type="HOGENOM" id="CLU_091257_2_1_4"/>
<dbReference type="OrthoDB" id="9805499at2"/>
<dbReference type="Proteomes" id="UP000006697">
    <property type="component" value="Chromosome"/>
</dbReference>
<dbReference type="GO" id="GO:0005737">
    <property type="term" value="C:cytoplasm"/>
    <property type="evidence" value="ECO:0007669"/>
    <property type="project" value="UniProtKB-SubCell"/>
</dbReference>
<dbReference type="GO" id="GO:0048476">
    <property type="term" value="C:Holliday junction resolvase complex"/>
    <property type="evidence" value="ECO:0007669"/>
    <property type="project" value="UniProtKB-UniRule"/>
</dbReference>
<dbReference type="GO" id="GO:0008821">
    <property type="term" value="F:crossover junction DNA endonuclease activity"/>
    <property type="evidence" value="ECO:0007669"/>
    <property type="project" value="UniProtKB-UniRule"/>
</dbReference>
<dbReference type="GO" id="GO:0003677">
    <property type="term" value="F:DNA binding"/>
    <property type="evidence" value="ECO:0007669"/>
    <property type="project" value="UniProtKB-KW"/>
</dbReference>
<dbReference type="GO" id="GO:0000287">
    <property type="term" value="F:magnesium ion binding"/>
    <property type="evidence" value="ECO:0007669"/>
    <property type="project" value="UniProtKB-UniRule"/>
</dbReference>
<dbReference type="GO" id="GO:0006310">
    <property type="term" value="P:DNA recombination"/>
    <property type="evidence" value="ECO:0007669"/>
    <property type="project" value="UniProtKB-UniRule"/>
</dbReference>
<dbReference type="GO" id="GO:0006281">
    <property type="term" value="P:DNA repair"/>
    <property type="evidence" value="ECO:0007669"/>
    <property type="project" value="UniProtKB-UniRule"/>
</dbReference>
<dbReference type="CDD" id="cd16962">
    <property type="entry name" value="RuvC"/>
    <property type="match status" value="1"/>
</dbReference>
<dbReference type="FunFam" id="3.30.420.10:FF:000002">
    <property type="entry name" value="Crossover junction endodeoxyribonuclease RuvC"/>
    <property type="match status" value="1"/>
</dbReference>
<dbReference type="Gene3D" id="3.30.420.10">
    <property type="entry name" value="Ribonuclease H-like superfamily/Ribonuclease H"/>
    <property type="match status" value="1"/>
</dbReference>
<dbReference type="HAMAP" id="MF_00034">
    <property type="entry name" value="RuvC"/>
    <property type="match status" value="1"/>
</dbReference>
<dbReference type="InterPro" id="IPR012337">
    <property type="entry name" value="RNaseH-like_sf"/>
</dbReference>
<dbReference type="InterPro" id="IPR036397">
    <property type="entry name" value="RNaseH_sf"/>
</dbReference>
<dbReference type="InterPro" id="IPR020563">
    <property type="entry name" value="X-over_junc_endoDNase_Mg_BS"/>
</dbReference>
<dbReference type="InterPro" id="IPR002176">
    <property type="entry name" value="X-over_junc_endoDNase_RuvC"/>
</dbReference>
<dbReference type="NCBIfam" id="TIGR00228">
    <property type="entry name" value="ruvC"/>
    <property type="match status" value="1"/>
</dbReference>
<dbReference type="PANTHER" id="PTHR30194">
    <property type="entry name" value="CROSSOVER JUNCTION ENDODEOXYRIBONUCLEASE RUVC"/>
    <property type="match status" value="1"/>
</dbReference>
<dbReference type="PANTHER" id="PTHR30194:SF3">
    <property type="entry name" value="CROSSOVER JUNCTION ENDODEOXYRIBONUCLEASE RUVC"/>
    <property type="match status" value="1"/>
</dbReference>
<dbReference type="Pfam" id="PF02075">
    <property type="entry name" value="RuvC"/>
    <property type="match status" value="1"/>
</dbReference>
<dbReference type="PRINTS" id="PR00696">
    <property type="entry name" value="RSOLVASERUVC"/>
</dbReference>
<dbReference type="SUPFAM" id="SSF53098">
    <property type="entry name" value="Ribonuclease H-like"/>
    <property type="match status" value="1"/>
</dbReference>
<dbReference type="PROSITE" id="PS01321">
    <property type="entry name" value="RUVC"/>
    <property type="match status" value="1"/>
</dbReference>
<keyword id="KW-0963">Cytoplasm</keyword>
<keyword id="KW-0227">DNA damage</keyword>
<keyword id="KW-0233">DNA recombination</keyword>
<keyword id="KW-0234">DNA repair</keyword>
<keyword id="KW-0238">DNA-binding</keyword>
<keyword id="KW-0255">Endonuclease</keyword>
<keyword id="KW-0378">Hydrolase</keyword>
<keyword id="KW-0460">Magnesium</keyword>
<keyword id="KW-0479">Metal-binding</keyword>
<keyword id="KW-0540">Nuclease</keyword>
<keyword id="KW-1185">Reference proteome</keyword>
<proteinExistence type="inferred from homology"/>
<gene>
    <name evidence="1" type="primary">ruvC</name>
    <name type="ordered locus">HEAR0256</name>
</gene>
<organism>
    <name type="scientific">Herminiimonas arsenicoxydans</name>
    <dbReference type="NCBI Taxonomy" id="204773"/>
    <lineage>
        <taxon>Bacteria</taxon>
        <taxon>Pseudomonadati</taxon>
        <taxon>Pseudomonadota</taxon>
        <taxon>Betaproteobacteria</taxon>
        <taxon>Burkholderiales</taxon>
        <taxon>Oxalobacteraceae</taxon>
        <taxon>Herminiimonas</taxon>
    </lineage>
</organism>